<proteinExistence type="evidence at protein level"/>
<evidence type="ECO:0000250" key="1">
    <source>
        <dbReference type="UniProtKB" id="P61849"/>
    </source>
</evidence>
<evidence type="ECO:0000255" key="2"/>
<evidence type="ECO:0000269" key="3">
    <source>
    </source>
</evidence>
<evidence type="ECO:0000303" key="4">
    <source>
    </source>
</evidence>
<evidence type="ECO:0000305" key="5"/>
<evidence type="ECO:0000305" key="6">
    <source>
    </source>
</evidence>
<reference evidence="5" key="1">
    <citation type="journal article" date="2012" name="Syst. Biol.">
        <title>Peptidomics-based phylogeny and biogeography of Mantophasmatodea (Hexapoda).</title>
        <authorList>
            <person name="Predel R."/>
            <person name="Neupert S."/>
            <person name="Huetteroth W."/>
            <person name="Kahnt J."/>
            <person name="Waidelich D."/>
            <person name="Roth S."/>
        </authorList>
    </citation>
    <scope>PROTEIN SEQUENCE</scope>
    <scope>PYROGLUTAMATE FORMATION AT GLN-1</scope>
    <scope>AMIDATION AT PHE-10</scope>
    <source>
        <tissue evidence="3">Corpora cardiaca</tissue>
    </source>
</reference>
<keyword id="KW-0027">Amidation</keyword>
<keyword id="KW-0903">Direct protein sequencing</keyword>
<keyword id="KW-0527">Neuropeptide</keyword>
<keyword id="KW-0873">Pyrrolidone carboxylic acid</keyword>
<keyword id="KW-0964">Secreted</keyword>
<feature type="peptide" id="PRO_0000421718" description="Myosuppressin" evidence="3">
    <location>
        <begin position="1"/>
        <end position="10"/>
    </location>
</feature>
<feature type="modified residue" description="Pyrrolidone carboxylic acid" evidence="3">
    <location>
        <position position="1"/>
    </location>
</feature>
<feature type="modified residue" description="Phenylalanine amide" evidence="3">
    <location>
        <position position="10"/>
    </location>
</feature>
<comment type="function">
    <text evidence="1">Myoinhibiting neuropeptide.</text>
</comment>
<comment type="subcellular location">
    <subcellularLocation>
        <location evidence="6">Secreted</location>
    </subcellularLocation>
</comment>
<comment type="similarity">
    <text evidence="2">Belongs to the myosuppressin family.</text>
</comment>
<organism>
    <name type="scientific">Tyrannophasma gladiator</name>
    <name type="common">Gladiator</name>
    <name type="synonym">Heel-walker</name>
    <dbReference type="NCBI Taxonomy" id="270861"/>
    <lineage>
        <taxon>Eukaryota</taxon>
        <taxon>Metazoa</taxon>
        <taxon>Ecdysozoa</taxon>
        <taxon>Arthropoda</taxon>
        <taxon>Hexapoda</taxon>
        <taxon>Insecta</taxon>
        <taxon>Pterygota</taxon>
        <taxon>Neoptera</taxon>
        <taxon>Polyneoptera</taxon>
        <taxon>Mantophasmatodea</taxon>
        <taxon>Mantophasmatodea incertae sedis</taxon>
        <taxon>Tyrannophasma</taxon>
    </lineage>
</organism>
<name>NEMS_TYRGL</name>
<accession>B3A0J1</accession>
<sequence length="10" mass="1275">QDVDHVFLRF</sequence>
<dbReference type="GO" id="GO:0005576">
    <property type="term" value="C:extracellular region"/>
    <property type="evidence" value="ECO:0007669"/>
    <property type="project" value="UniProtKB-SubCell"/>
</dbReference>
<dbReference type="GO" id="GO:0007218">
    <property type="term" value="P:neuropeptide signaling pathway"/>
    <property type="evidence" value="ECO:0007669"/>
    <property type="project" value="UniProtKB-KW"/>
</dbReference>
<protein>
    <recommendedName>
        <fullName evidence="4">Myosuppressin</fullName>
        <shortName evidence="4">MS</shortName>
    </recommendedName>
</protein>